<reference key="1">
    <citation type="submission" date="1999-04" db="EMBL/GenBank/DDBJ databases">
        <title>The Drosophila vha13 gene encodes a G-subunit of the VATPase.</title>
        <authorList>
            <person name="Dow J.A.T."/>
        </authorList>
    </citation>
    <scope>NUCLEOTIDE SEQUENCE [MRNA]</scope>
</reference>
<reference key="2">
    <citation type="journal article" date="2000" name="Science">
        <title>The genome sequence of Drosophila melanogaster.</title>
        <authorList>
            <person name="Adams M.D."/>
            <person name="Celniker S.E."/>
            <person name="Holt R.A."/>
            <person name="Evans C.A."/>
            <person name="Gocayne J.D."/>
            <person name="Amanatides P.G."/>
            <person name="Scherer S.E."/>
            <person name="Li P.W."/>
            <person name="Hoskins R.A."/>
            <person name="Galle R.F."/>
            <person name="George R.A."/>
            <person name="Lewis S.E."/>
            <person name="Richards S."/>
            <person name="Ashburner M."/>
            <person name="Henderson S.N."/>
            <person name="Sutton G.G."/>
            <person name="Wortman J.R."/>
            <person name="Yandell M.D."/>
            <person name="Zhang Q."/>
            <person name="Chen L.X."/>
            <person name="Brandon R.C."/>
            <person name="Rogers Y.-H.C."/>
            <person name="Blazej R.G."/>
            <person name="Champe M."/>
            <person name="Pfeiffer B.D."/>
            <person name="Wan K.H."/>
            <person name="Doyle C."/>
            <person name="Baxter E.G."/>
            <person name="Helt G."/>
            <person name="Nelson C.R."/>
            <person name="Miklos G.L.G."/>
            <person name="Abril J.F."/>
            <person name="Agbayani A."/>
            <person name="An H.-J."/>
            <person name="Andrews-Pfannkoch C."/>
            <person name="Baldwin D."/>
            <person name="Ballew R.M."/>
            <person name="Basu A."/>
            <person name="Baxendale J."/>
            <person name="Bayraktaroglu L."/>
            <person name="Beasley E.M."/>
            <person name="Beeson K.Y."/>
            <person name="Benos P.V."/>
            <person name="Berman B.P."/>
            <person name="Bhandari D."/>
            <person name="Bolshakov S."/>
            <person name="Borkova D."/>
            <person name="Botchan M.R."/>
            <person name="Bouck J."/>
            <person name="Brokstein P."/>
            <person name="Brottier P."/>
            <person name="Burtis K.C."/>
            <person name="Busam D.A."/>
            <person name="Butler H."/>
            <person name="Cadieu E."/>
            <person name="Center A."/>
            <person name="Chandra I."/>
            <person name="Cherry J.M."/>
            <person name="Cawley S."/>
            <person name="Dahlke C."/>
            <person name="Davenport L.B."/>
            <person name="Davies P."/>
            <person name="de Pablos B."/>
            <person name="Delcher A."/>
            <person name="Deng Z."/>
            <person name="Mays A.D."/>
            <person name="Dew I."/>
            <person name="Dietz S.M."/>
            <person name="Dodson K."/>
            <person name="Doup L.E."/>
            <person name="Downes M."/>
            <person name="Dugan-Rocha S."/>
            <person name="Dunkov B.C."/>
            <person name="Dunn P."/>
            <person name="Durbin K.J."/>
            <person name="Evangelista C.C."/>
            <person name="Ferraz C."/>
            <person name="Ferriera S."/>
            <person name="Fleischmann W."/>
            <person name="Fosler C."/>
            <person name="Gabrielian A.E."/>
            <person name="Garg N.S."/>
            <person name="Gelbart W.M."/>
            <person name="Glasser K."/>
            <person name="Glodek A."/>
            <person name="Gong F."/>
            <person name="Gorrell J.H."/>
            <person name="Gu Z."/>
            <person name="Guan P."/>
            <person name="Harris M."/>
            <person name="Harris N.L."/>
            <person name="Harvey D.A."/>
            <person name="Heiman T.J."/>
            <person name="Hernandez J.R."/>
            <person name="Houck J."/>
            <person name="Hostin D."/>
            <person name="Houston K.A."/>
            <person name="Howland T.J."/>
            <person name="Wei M.-H."/>
            <person name="Ibegwam C."/>
            <person name="Jalali M."/>
            <person name="Kalush F."/>
            <person name="Karpen G.H."/>
            <person name="Ke Z."/>
            <person name="Kennison J.A."/>
            <person name="Ketchum K.A."/>
            <person name="Kimmel B.E."/>
            <person name="Kodira C.D."/>
            <person name="Kraft C.L."/>
            <person name="Kravitz S."/>
            <person name="Kulp D."/>
            <person name="Lai Z."/>
            <person name="Lasko P."/>
            <person name="Lei Y."/>
            <person name="Levitsky A.A."/>
            <person name="Li J.H."/>
            <person name="Li Z."/>
            <person name="Liang Y."/>
            <person name="Lin X."/>
            <person name="Liu X."/>
            <person name="Mattei B."/>
            <person name="McIntosh T.C."/>
            <person name="McLeod M.P."/>
            <person name="McPherson D."/>
            <person name="Merkulov G."/>
            <person name="Milshina N.V."/>
            <person name="Mobarry C."/>
            <person name="Morris J."/>
            <person name="Moshrefi A."/>
            <person name="Mount S.M."/>
            <person name="Moy M."/>
            <person name="Murphy B."/>
            <person name="Murphy L."/>
            <person name="Muzny D.M."/>
            <person name="Nelson D.L."/>
            <person name="Nelson D.R."/>
            <person name="Nelson K.A."/>
            <person name="Nixon K."/>
            <person name="Nusskern D.R."/>
            <person name="Pacleb J.M."/>
            <person name="Palazzolo M."/>
            <person name="Pittman G.S."/>
            <person name="Pan S."/>
            <person name="Pollard J."/>
            <person name="Puri V."/>
            <person name="Reese M.G."/>
            <person name="Reinert K."/>
            <person name="Remington K."/>
            <person name="Saunders R.D.C."/>
            <person name="Scheeler F."/>
            <person name="Shen H."/>
            <person name="Shue B.C."/>
            <person name="Siden-Kiamos I."/>
            <person name="Simpson M."/>
            <person name="Skupski M.P."/>
            <person name="Smith T.J."/>
            <person name="Spier E."/>
            <person name="Spradling A.C."/>
            <person name="Stapleton M."/>
            <person name="Strong R."/>
            <person name="Sun E."/>
            <person name="Svirskas R."/>
            <person name="Tector C."/>
            <person name="Turner R."/>
            <person name="Venter E."/>
            <person name="Wang A.H."/>
            <person name="Wang X."/>
            <person name="Wang Z.-Y."/>
            <person name="Wassarman D.A."/>
            <person name="Weinstock G.M."/>
            <person name="Weissenbach J."/>
            <person name="Williams S.M."/>
            <person name="Woodage T."/>
            <person name="Worley K.C."/>
            <person name="Wu D."/>
            <person name="Yang S."/>
            <person name="Yao Q.A."/>
            <person name="Ye J."/>
            <person name="Yeh R.-F."/>
            <person name="Zaveri J.S."/>
            <person name="Zhan M."/>
            <person name="Zhang G."/>
            <person name="Zhao Q."/>
            <person name="Zheng L."/>
            <person name="Zheng X.H."/>
            <person name="Zhong F.N."/>
            <person name="Zhong W."/>
            <person name="Zhou X."/>
            <person name="Zhu S.C."/>
            <person name="Zhu X."/>
            <person name="Smith H.O."/>
            <person name="Gibbs R.A."/>
            <person name="Myers E.W."/>
            <person name="Rubin G.M."/>
            <person name="Venter J.C."/>
        </authorList>
    </citation>
    <scope>NUCLEOTIDE SEQUENCE [LARGE SCALE GENOMIC DNA]</scope>
    <source>
        <strain>Berkeley</strain>
    </source>
</reference>
<reference key="3">
    <citation type="journal article" date="2002" name="Genome Biol.">
        <title>Annotation of the Drosophila melanogaster euchromatic genome: a systematic review.</title>
        <authorList>
            <person name="Misra S."/>
            <person name="Crosby M.A."/>
            <person name="Mungall C.J."/>
            <person name="Matthews B.B."/>
            <person name="Campbell K.S."/>
            <person name="Hradecky P."/>
            <person name="Huang Y."/>
            <person name="Kaminker J.S."/>
            <person name="Millburn G.H."/>
            <person name="Prochnik S.E."/>
            <person name="Smith C.D."/>
            <person name="Tupy J.L."/>
            <person name="Whitfield E.J."/>
            <person name="Bayraktaroglu L."/>
            <person name="Berman B.P."/>
            <person name="Bettencourt B.R."/>
            <person name="Celniker S.E."/>
            <person name="de Grey A.D.N.J."/>
            <person name="Drysdale R.A."/>
            <person name="Harris N.L."/>
            <person name="Richter J."/>
            <person name="Russo S."/>
            <person name="Schroeder A.J."/>
            <person name="Shu S.Q."/>
            <person name="Stapleton M."/>
            <person name="Yamada C."/>
            <person name="Ashburner M."/>
            <person name="Gelbart W.M."/>
            <person name="Rubin G.M."/>
            <person name="Lewis S.E."/>
        </authorList>
    </citation>
    <scope>GENOME REANNOTATION</scope>
    <source>
        <strain>Berkeley</strain>
    </source>
</reference>
<reference key="4">
    <citation type="journal article" date="2002" name="Genome Biol.">
        <title>A Drosophila full-length cDNA resource.</title>
        <authorList>
            <person name="Stapleton M."/>
            <person name="Carlson J.W."/>
            <person name="Brokstein P."/>
            <person name="Yu C."/>
            <person name="Champe M."/>
            <person name="George R.A."/>
            <person name="Guarin H."/>
            <person name="Kronmiller B."/>
            <person name="Pacleb J.M."/>
            <person name="Park S."/>
            <person name="Wan K.H."/>
            <person name="Rubin G.M."/>
            <person name="Celniker S.E."/>
        </authorList>
    </citation>
    <scope>NUCLEOTIDE SEQUENCE [LARGE SCALE MRNA]</scope>
    <source>
        <strain>Berkeley</strain>
        <tissue>Testis</tissue>
    </source>
</reference>
<reference key="5">
    <citation type="journal article" date="2020" name="Nature">
        <title>An intestinal zinc sensor regulates food intake and developmental growth.</title>
        <authorList>
            <person name="Redhai S."/>
            <person name="Pilgrim C."/>
            <person name="Gaspar P."/>
            <person name="Giesen L.V."/>
            <person name="Lopes T."/>
            <person name="Riabinina O."/>
            <person name="Grenier T."/>
            <person name="Milona A."/>
            <person name="Chanana B."/>
            <person name="Swadling J.B."/>
            <person name="Wang Y.F."/>
            <person name="Dahalan F."/>
            <person name="Yuan M."/>
            <person name="Wilsch-Brauninger M."/>
            <person name="Lin W.H."/>
            <person name="Dennison N."/>
            <person name="Capriotti P."/>
            <person name="Lawniczak M.K.N."/>
            <person name="Baines R.A."/>
            <person name="Warnecke T."/>
            <person name="Windbichler N."/>
            <person name="Leulier F."/>
            <person name="Bellono N.W."/>
            <person name="Miguel-Aliaga I."/>
        </authorList>
    </citation>
    <scope>FUNCTION</scope>
    <scope>DISRUPTION PHENOTYPE</scope>
</reference>
<organism>
    <name type="scientific">Drosophila melanogaster</name>
    <name type="common">Fruit fly</name>
    <dbReference type="NCBI Taxonomy" id="7227"/>
    <lineage>
        <taxon>Eukaryota</taxon>
        <taxon>Metazoa</taxon>
        <taxon>Ecdysozoa</taxon>
        <taxon>Arthropoda</taxon>
        <taxon>Hexapoda</taxon>
        <taxon>Insecta</taxon>
        <taxon>Pterygota</taxon>
        <taxon>Neoptera</taxon>
        <taxon>Endopterygota</taxon>
        <taxon>Diptera</taxon>
        <taxon>Brachycera</taxon>
        <taxon>Muscomorpha</taxon>
        <taxon>Ephydroidea</taxon>
        <taxon>Drosophilidae</taxon>
        <taxon>Drosophila</taxon>
        <taxon>Sophophora</taxon>
    </lineage>
</organism>
<comment type="function">
    <text evidence="1 2">Subunit of the V1 complex of vacuolar(H+)-ATPase (V-ATPase), a multisubunit enzyme composed of a peripheral complex (V1) that hydrolyzes ATP and a membrane integral complex (V0) that translocates protons (By similarity). V-ATPase is responsible for acidifying and maintaining the pH of intracellular compartments and in some cell types, is targeted to the plasma membrane, where it is responsible for acidifying the extracellular environment (By similarity). In enterocytes, acts as part of a pHCl-2 sensory pathway which mediates Tor-dependent larval growth and metabolism in response to zinc availability (PubMed:32269334). Likely acts in maintaining enterocyte lysosomal acidification which consequently promotes Tor activation at the lysosome membrane (PubMed:32269334).</text>
</comment>
<comment type="subunit">
    <text evidence="1">V-ATPase is a heteromultimeric enzyme made up of two complexes: the ATP-hydrolytic V1 complex and the proton translocation V0 complex (By similarity). The V1 complex consists of three catalytic AB heterodimers that form a heterohexamer, three peripheral stalks each consisting of EG heterodimers, one central rotor including subunits D and F, and the regulatory subunits C and H (By similarity). The proton translocation complex V0 consists of the proton transport subunit a, a ring of proteolipid subunits c9c'', rotary subunit d, subunits e and f, and the accessory subunits VhaAC45 and ATP6AP2 (By similarity).</text>
</comment>
<comment type="interaction">
    <interactant intactId="EBI-86624">
        <id>Q9XZH6</id>
    </interactant>
    <interactant intactId="EBI-84926">
        <id>P54611</id>
        <label>Vha26</label>
    </interactant>
    <organismsDiffer>false</organismsDiffer>
    <experiments>7</experiments>
</comment>
<comment type="disruption phenotype">
    <text evidence="2">RNAi-mediated knockdown specifically in pHCl-2 expressing enterocytes delays pupariation and reduces food intake. However, knockdown in other enterocytes has no effect on developmental timing.</text>
</comment>
<comment type="similarity">
    <text evidence="3">Belongs to the V-ATPase G subunit family.</text>
</comment>
<sequence length="117" mass="13626">MASQTQGIQQLLAAEKKAAEKVAEARKRKARRLKQAKDEATEEIEKFRQERERAFKEFEAKHMGSREGVAAKIDADIRVKLADMDRAIQTRKDPFILEILQYVYNISPEVHKNYNHK</sequence>
<name>VATG_DROME</name>
<evidence type="ECO:0000250" key="1">
    <source>
        <dbReference type="UniProtKB" id="O75348"/>
    </source>
</evidence>
<evidence type="ECO:0000269" key="2">
    <source>
    </source>
</evidence>
<evidence type="ECO:0000305" key="3"/>
<dbReference type="EMBL" id="AF143200">
    <property type="protein sequence ID" value="AAD32690.1"/>
    <property type="molecule type" value="mRNA"/>
</dbReference>
<dbReference type="EMBL" id="AE014297">
    <property type="protein sequence ID" value="AAF55686.1"/>
    <property type="molecule type" value="Genomic_DNA"/>
</dbReference>
<dbReference type="EMBL" id="AY075202">
    <property type="protein sequence ID" value="AAL68070.1"/>
    <property type="molecule type" value="mRNA"/>
</dbReference>
<dbReference type="RefSeq" id="NP_001287407.1">
    <property type="nucleotide sequence ID" value="NM_001300478.1"/>
</dbReference>
<dbReference type="RefSeq" id="NP_477437.1">
    <property type="nucleotide sequence ID" value="NM_058089.5"/>
</dbReference>
<dbReference type="SMR" id="Q9XZH6"/>
<dbReference type="BioGRID" id="67333">
    <property type="interactions" value="7"/>
</dbReference>
<dbReference type="DIP" id="DIP-18952N"/>
<dbReference type="FunCoup" id="Q9XZH6">
    <property type="interactions" value="513"/>
</dbReference>
<dbReference type="IntAct" id="Q9XZH6">
    <property type="interactions" value="11"/>
</dbReference>
<dbReference type="STRING" id="7227.FBpp0311933"/>
<dbReference type="PaxDb" id="7227-FBpp0083214"/>
<dbReference type="DNASU" id="42341"/>
<dbReference type="EnsemblMetazoa" id="FBtr0083804">
    <property type="protein sequence ID" value="FBpp0083214"/>
    <property type="gene ID" value="FBgn0283536"/>
</dbReference>
<dbReference type="EnsemblMetazoa" id="FBtr0346100">
    <property type="protein sequence ID" value="FBpp0311933"/>
    <property type="gene ID" value="FBgn0283536"/>
</dbReference>
<dbReference type="GeneID" id="42341"/>
<dbReference type="KEGG" id="dme:Dmel_CG6213"/>
<dbReference type="AGR" id="FB:FBgn0283536"/>
<dbReference type="CTD" id="42341"/>
<dbReference type="FlyBase" id="FBgn0283536">
    <property type="gene designation" value="Vha13"/>
</dbReference>
<dbReference type="VEuPathDB" id="VectorBase:FBgn0283536"/>
<dbReference type="eggNOG" id="KOG1772">
    <property type="taxonomic scope" value="Eukaryota"/>
</dbReference>
<dbReference type="GeneTree" id="ENSGT00940000161280"/>
<dbReference type="HOGENOM" id="CLU_125101_1_1_1"/>
<dbReference type="InParanoid" id="Q9XZH6"/>
<dbReference type="OMA" id="ARKYRQD"/>
<dbReference type="OrthoDB" id="250802at2759"/>
<dbReference type="PhylomeDB" id="Q9XZH6"/>
<dbReference type="Reactome" id="R-DME-1222556">
    <property type="pathway name" value="ROS and RNS production in phagocytes"/>
</dbReference>
<dbReference type="Reactome" id="R-DME-77387">
    <property type="pathway name" value="Insulin receptor recycling"/>
</dbReference>
<dbReference type="Reactome" id="R-DME-917977">
    <property type="pathway name" value="Transferrin endocytosis and recycling"/>
</dbReference>
<dbReference type="Reactome" id="R-DME-9639288">
    <property type="pathway name" value="Amino acids regulate mTORC1"/>
</dbReference>
<dbReference type="Reactome" id="R-DME-983712">
    <property type="pathway name" value="Ion channel transport"/>
</dbReference>
<dbReference type="SignaLink" id="Q9XZH6"/>
<dbReference type="GenomeRNAi" id="42341"/>
<dbReference type="PRO" id="PR:Q9XZH6"/>
<dbReference type="Proteomes" id="UP000000803">
    <property type="component" value="Chromosome 3R"/>
</dbReference>
<dbReference type="Bgee" id="FBgn0283536">
    <property type="expression patterns" value="Expressed in adult hindgut (Drosophila) and 290 other cell types or tissues"/>
</dbReference>
<dbReference type="ExpressionAtlas" id="Q9XZH6">
    <property type="expression patterns" value="baseline and differential"/>
</dbReference>
<dbReference type="GO" id="GO:0033181">
    <property type="term" value="C:plasma membrane proton-transporting V-type ATPase complex"/>
    <property type="evidence" value="ECO:0000315"/>
    <property type="project" value="FlyBase"/>
</dbReference>
<dbReference type="GO" id="GO:0098793">
    <property type="term" value="C:presynapse"/>
    <property type="evidence" value="ECO:0007669"/>
    <property type="project" value="GOC"/>
</dbReference>
<dbReference type="GO" id="GO:0000221">
    <property type="term" value="C:vacuolar proton-transporting V-type ATPase, V1 domain"/>
    <property type="evidence" value="ECO:0000318"/>
    <property type="project" value="GO_Central"/>
</dbReference>
<dbReference type="GO" id="GO:0016887">
    <property type="term" value="F:ATP hydrolysis activity"/>
    <property type="evidence" value="ECO:0000318"/>
    <property type="project" value="GO_Central"/>
</dbReference>
<dbReference type="GO" id="GO:0046961">
    <property type="term" value="F:proton-transporting ATPase activity, rotational mechanism"/>
    <property type="evidence" value="ECO:0000318"/>
    <property type="project" value="GO_Central"/>
</dbReference>
<dbReference type="GO" id="GO:0035002">
    <property type="term" value="P:liquid clearance, open tracheal system"/>
    <property type="evidence" value="ECO:0007001"/>
    <property type="project" value="FlyBase"/>
</dbReference>
<dbReference type="GO" id="GO:1902600">
    <property type="term" value="P:proton transmembrane transport"/>
    <property type="evidence" value="ECO:0000305"/>
    <property type="project" value="FlyBase"/>
</dbReference>
<dbReference type="GO" id="GO:0097401">
    <property type="term" value="P:synaptic vesicle lumen acidification"/>
    <property type="evidence" value="ECO:0000318"/>
    <property type="project" value="GO_Central"/>
</dbReference>
<dbReference type="GO" id="GO:0007430">
    <property type="term" value="P:terminal branching, open tracheal system"/>
    <property type="evidence" value="ECO:0000315"/>
    <property type="project" value="FlyBase"/>
</dbReference>
<dbReference type="FunFam" id="1.20.5.2950:FF:000001">
    <property type="entry name" value="V-type proton ATPase subunit G"/>
    <property type="match status" value="1"/>
</dbReference>
<dbReference type="FunFam" id="1.20.5.620:FF:000004">
    <property type="entry name" value="V-type proton ATPase subunit G"/>
    <property type="match status" value="1"/>
</dbReference>
<dbReference type="Gene3D" id="1.20.5.2950">
    <property type="match status" value="1"/>
</dbReference>
<dbReference type="InterPro" id="IPR005124">
    <property type="entry name" value="V-ATPase_G"/>
</dbReference>
<dbReference type="NCBIfam" id="TIGR01147">
    <property type="entry name" value="V_ATP_synt_G"/>
    <property type="match status" value="1"/>
</dbReference>
<dbReference type="PANTHER" id="PTHR12713:SF11">
    <property type="entry name" value="V-TYPE PROTON ATPASE SUBUNIT G"/>
    <property type="match status" value="1"/>
</dbReference>
<dbReference type="PANTHER" id="PTHR12713">
    <property type="entry name" value="VACUOLAR ATP SYNTHASE SUBUNIT G"/>
    <property type="match status" value="1"/>
</dbReference>
<dbReference type="Pfam" id="PF03179">
    <property type="entry name" value="V-ATPase_G"/>
    <property type="match status" value="1"/>
</dbReference>
<keyword id="KW-0375">Hydrogen ion transport</keyword>
<keyword id="KW-0406">Ion transport</keyword>
<keyword id="KW-1185">Reference proteome</keyword>
<keyword id="KW-0813">Transport</keyword>
<gene>
    <name type="primary">Vha13</name>
    <name type="ORF">CG6213</name>
</gene>
<proteinExistence type="evidence at protein level"/>
<accession>Q9XZH6</accession>
<protein>
    <recommendedName>
        <fullName>V-type proton ATPase subunit G</fullName>
        <shortName>V-ATPase subunit G</shortName>
    </recommendedName>
    <alternativeName>
        <fullName>V-ATPase 13 kDa subunit</fullName>
    </alternativeName>
    <alternativeName>
        <fullName>Vacuolar proton pump subunit G</fullName>
    </alternativeName>
</protein>
<feature type="chain" id="PRO_0000192906" description="V-type proton ATPase subunit G">
    <location>
        <begin position="1"/>
        <end position="117"/>
    </location>
</feature>